<geneLocation type="chloroplast"/>
<evidence type="ECO:0000255" key="1">
    <source>
        <dbReference type="HAMAP-Rule" id="MF_00294"/>
    </source>
</evidence>
<evidence type="ECO:0000305" key="2"/>
<reference key="1">
    <citation type="submission" date="2005-03" db="EMBL/GenBank/DDBJ databases">
        <title>Complete structure of the chloroplast genome of Populus alba.</title>
        <authorList>
            <person name="Okumura S."/>
            <person name="Yamashita A."/>
            <person name="Kanamoto H."/>
            <person name="Hattori M."/>
            <person name="Takase H."/>
            <person name="Tomizawa K."/>
        </authorList>
    </citation>
    <scope>NUCLEOTIDE SEQUENCE [LARGE SCALE GENOMIC DNA]</scope>
</reference>
<dbReference type="EMBL" id="AP008956">
    <property type="protein sequence ID" value="BAE97226.1"/>
    <property type="molecule type" value="Genomic_DNA"/>
</dbReference>
<dbReference type="RefSeq" id="YP_665579.1">
    <property type="nucleotide sequence ID" value="NC_008235.1"/>
</dbReference>
<dbReference type="GeneID" id="4178251"/>
<dbReference type="KEGG" id="palz:4178251"/>
<dbReference type="OrthoDB" id="1809at3646"/>
<dbReference type="GO" id="GO:0009507">
    <property type="term" value="C:chloroplast"/>
    <property type="evidence" value="ECO:0007669"/>
    <property type="project" value="UniProtKB-SubCell"/>
</dbReference>
<dbReference type="GO" id="GO:1990904">
    <property type="term" value="C:ribonucleoprotein complex"/>
    <property type="evidence" value="ECO:0007669"/>
    <property type="project" value="UniProtKB-KW"/>
</dbReference>
<dbReference type="GO" id="GO:0005840">
    <property type="term" value="C:ribosome"/>
    <property type="evidence" value="ECO:0007669"/>
    <property type="project" value="UniProtKB-KW"/>
</dbReference>
<dbReference type="GO" id="GO:0003735">
    <property type="term" value="F:structural constituent of ribosome"/>
    <property type="evidence" value="ECO:0007669"/>
    <property type="project" value="InterPro"/>
</dbReference>
<dbReference type="GO" id="GO:0006412">
    <property type="term" value="P:translation"/>
    <property type="evidence" value="ECO:0007669"/>
    <property type="project" value="UniProtKB-UniRule"/>
</dbReference>
<dbReference type="Gene3D" id="2.20.28.120">
    <property type="entry name" value="Ribosomal protein L33"/>
    <property type="match status" value="1"/>
</dbReference>
<dbReference type="HAMAP" id="MF_00294">
    <property type="entry name" value="Ribosomal_bL33"/>
    <property type="match status" value="1"/>
</dbReference>
<dbReference type="InterPro" id="IPR001705">
    <property type="entry name" value="Ribosomal_bL33"/>
</dbReference>
<dbReference type="InterPro" id="IPR018264">
    <property type="entry name" value="Ribosomal_bL33_CS"/>
</dbReference>
<dbReference type="InterPro" id="IPR038584">
    <property type="entry name" value="Ribosomal_bL33_sf"/>
</dbReference>
<dbReference type="InterPro" id="IPR011332">
    <property type="entry name" value="Ribosomal_zn-bd"/>
</dbReference>
<dbReference type="NCBIfam" id="NF001764">
    <property type="entry name" value="PRK00504.1"/>
    <property type="match status" value="1"/>
</dbReference>
<dbReference type="NCBIfam" id="NF001860">
    <property type="entry name" value="PRK00595.1"/>
    <property type="match status" value="1"/>
</dbReference>
<dbReference type="NCBIfam" id="TIGR01023">
    <property type="entry name" value="rpmG_bact"/>
    <property type="match status" value="1"/>
</dbReference>
<dbReference type="PANTHER" id="PTHR43168">
    <property type="entry name" value="50S RIBOSOMAL PROTEIN L33, CHLOROPLASTIC"/>
    <property type="match status" value="1"/>
</dbReference>
<dbReference type="PANTHER" id="PTHR43168:SF2">
    <property type="entry name" value="LARGE RIBOSOMAL SUBUNIT PROTEIN BL33C"/>
    <property type="match status" value="1"/>
</dbReference>
<dbReference type="Pfam" id="PF00471">
    <property type="entry name" value="Ribosomal_L33"/>
    <property type="match status" value="1"/>
</dbReference>
<dbReference type="SUPFAM" id="SSF57829">
    <property type="entry name" value="Zn-binding ribosomal proteins"/>
    <property type="match status" value="1"/>
</dbReference>
<dbReference type="PROSITE" id="PS00582">
    <property type="entry name" value="RIBOSOMAL_L33"/>
    <property type="match status" value="1"/>
</dbReference>
<gene>
    <name evidence="1" type="primary">rpl33</name>
</gene>
<accession>Q14FD6</accession>
<feature type="chain" id="PRO_0000276515" description="Large ribosomal subunit protein bL33c">
    <location>
        <begin position="1"/>
        <end position="66"/>
    </location>
</feature>
<comment type="subcellular location">
    <subcellularLocation>
        <location>Plastid</location>
        <location>Chloroplast</location>
    </subcellularLocation>
</comment>
<comment type="similarity">
    <text evidence="1">Belongs to the bacterial ribosomal protein bL33 family.</text>
</comment>
<protein>
    <recommendedName>
        <fullName evidence="1">Large ribosomal subunit protein bL33c</fullName>
    </recommendedName>
    <alternativeName>
        <fullName evidence="2">50S ribosomal protein L33, chloroplastic</fullName>
    </alternativeName>
</protein>
<keyword id="KW-0150">Chloroplast</keyword>
<keyword id="KW-0934">Plastid</keyword>
<keyword id="KW-0687">Ribonucleoprotein</keyword>
<keyword id="KW-0689">Ribosomal protein</keyword>
<sequence>MANGKDVRIRVILECTSCVRKSVNKKSIGISRYITQKNRHNRPSRLELRKFCPYCYKHTIHGEIKK</sequence>
<name>RK33_POPAL</name>
<proteinExistence type="inferred from homology"/>
<organism>
    <name type="scientific">Populus alba</name>
    <name type="common">White poplar</name>
    <dbReference type="NCBI Taxonomy" id="43335"/>
    <lineage>
        <taxon>Eukaryota</taxon>
        <taxon>Viridiplantae</taxon>
        <taxon>Streptophyta</taxon>
        <taxon>Embryophyta</taxon>
        <taxon>Tracheophyta</taxon>
        <taxon>Spermatophyta</taxon>
        <taxon>Magnoliopsida</taxon>
        <taxon>eudicotyledons</taxon>
        <taxon>Gunneridae</taxon>
        <taxon>Pentapetalae</taxon>
        <taxon>rosids</taxon>
        <taxon>fabids</taxon>
        <taxon>Malpighiales</taxon>
        <taxon>Salicaceae</taxon>
        <taxon>Saliceae</taxon>
        <taxon>Populus</taxon>
    </lineage>
</organism>